<evidence type="ECO:0000255" key="1">
    <source>
        <dbReference type="PROSITE-ProRule" id="PRU00080"/>
    </source>
</evidence>
<evidence type="ECO:0000305" key="2"/>
<organism>
    <name type="scientific">Arabidopsis thaliana</name>
    <name type="common">Mouse-ear cress</name>
    <dbReference type="NCBI Taxonomy" id="3702"/>
    <lineage>
        <taxon>Eukaryota</taxon>
        <taxon>Viridiplantae</taxon>
        <taxon>Streptophyta</taxon>
        <taxon>Embryophyta</taxon>
        <taxon>Tracheophyta</taxon>
        <taxon>Spermatophyta</taxon>
        <taxon>Magnoliopsida</taxon>
        <taxon>eudicotyledons</taxon>
        <taxon>Gunneridae</taxon>
        <taxon>Pentapetalae</taxon>
        <taxon>rosids</taxon>
        <taxon>malvids</taxon>
        <taxon>Brassicales</taxon>
        <taxon>Brassicaceae</taxon>
        <taxon>Camelineae</taxon>
        <taxon>Arabidopsis</taxon>
    </lineage>
</organism>
<accession>Q1PFK0</accession>
<accession>Q9LG01</accession>
<gene>
    <name type="ordered locus">At1g55660</name>
    <name type="ORF">F20N2.9</name>
</gene>
<keyword id="KW-0025">Alternative splicing</keyword>
<keyword id="KW-0433">Leucine-rich repeat</keyword>
<keyword id="KW-1185">Reference proteome</keyword>
<keyword id="KW-0677">Repeat</keyword>
<reference key="1">
    <citation type="journal article" date="2000" name="Nature">
        <title>Sequence and analysis of chromosome 1 of the plant Arabidopsis thaliana.</title>
        <authorList>
            <person name="Theologis A."/>
            <person name="Ecker J.R."/>
            <person name="Palm C.J."/>
            <person name="Federspiel N.A."/>
            <person name="Kaul S."/>
            <person name="White O."/>
            <person name="Alonso J."/>
            <person name="Altafi H."/>
            <person name="Araujo R."/>
            <person name="Bowman C.L."/>
            <person name="Brooks S.Y."/>
            <person name="Buehler E."/>
            <person name="Chan A."/>
            <person name="Chao Q."/>
            <person name="Chen H."/>
            <person name="Cheuk R.F."/>
            <person name="Chin C.W."/>
            <person name="Chung M.K."/>
            <person name="Conn L."/>
            <person name="Conway A.B."/>
            <person name="Conway A.R."/>
            <person name="Creasy T.H."/>
            <person name="Dewar K."/>
            <person name="Dunn P."/>
            <person name="Etgu P."/>
            <person name="Feldblyum T.V."/>
            <person name="Feng J.-D."/>
            <person name="Fong B."/>
            <person name="Fujii C.Y."/>
            <person name="Gill J.E."/>
            <person name="Goldsmith A.D."/>
            <person name="Haas B."/>
            <person name="Hansen N.F."/>
            <person name="Hughes B."/>
            <person name="Huizar L."/>
            <person name="Hunter J.L."/>
            <person name="Jenkins J."/>
            <person name="Johnson-Hopson C."/>
            <person name="Khan S."/>
            <person name="Khaykin E."/>
            <person name="Kim C.J."/>
            <person name="Koo H.L."/>
            <person name="Kremenetskaia I."/>
            <person name="Kurtz D.B."/>
            <person name="Kwan A."/>
            <person name="Lam B."/>
            <person name="Langin-Hooper S."/>
            <person name="Lee A."/>
            <person name="Lee J.M."/>
            <person name="Lenz C.A."/>
            <person name="Li J.H."/>
            <person name="Li Y.-P."/>
            <person name="Lin X."/>
            <person name="Liu S.X."/>
            <person name="Liu Z.A."/>
            <person name="Luros J.S."/>
            <person name="Maiti R."/>
            <person name="Marziali A."/>
            <person name="Militscher J."/>
            <person name="Miranda M."/>
            <person name="Nguyen M."/>
            <person name="Nierman W.C."/>
            <person name="Osborne B.I."/>
            <person name="Pai G."/>
            <person name="Peterson J."/>
            <person name="Pham P.K."/>
            <person name="Rizzo M."/>
            <person name="Rooney T."/>
            <person name="Rowley D."/>
            <person name="Sakano H."/>
            <person name="Salzberg S.L."/>
            <person name="Schwartz J.R."/>
            <person name="Shinn P."/>
            <person name="Southwick A.M."/>
            <person name="Sun H."/>
            <person name="Tallon L.J."/>
            <person name="Tambunga G."/>
            <person name="Toriumi M.J."/>
            <person name="Town C.D."/>
            <person name="Utterback T."/>
            <person name="Van Aken S."/>
            <person name="Vaysberg M."/>
            <person name="Vysotskaia V.S."/>
            <person name="Walker M."/>
            <person name="Wu D."/>
            <person name="Yu G."/>
            <person name="Fraser C.M."/>
            <person name="Venter J.C."/>
            <person name="Davis R.W."/>
        </authorList>
    </citation>
    <scope>NUCLEOTIDE SEQUENCE [LARGE SCALE GENOMIC DNA]</scope>
    <source>
        <strain>cv. Columbia</strain>
    </source>
</reference>
<reference key="2">
    <citation type="journal article" date="2017" name="Plant J.">
        <title>Araport11: a complete reannotation of the Arabidopsis thaliana reference genome.</title>
        <authorList>
            <person name="Cheng C.Y."/>
            <person name="Krishnakumar V."/>
            <person name="Chan A.P."/>
            <person name="Thibaud-Nissen F."/>
            <person name="Schobel S."/>
            <person name="Town C.D."/>
        </authorList>
    </citation>
    <scope>GENOME REANNOTATION</scope>
    <source>
        <strain>cv. Columbia</strain>
    </source>
</reference>
<reference key="3">
    <citation type="journal article" date="2006" name="Plant Biotechnol. J.">
        <title>Simultaneous high-throughput recombinational cloning of open reading frames in closed and open configurations.</title>
        <authorList>
            <person name="Underwood B.A."/>
            <person name="Vanderhaeghen R."/>
            <person name="Whitford R."/>
            <person name="Town C.D."/>
            <person name="Hilson P."/>
        </authorList>
    </citation>
    <scope>NUCLEOTIDE SEQUENCE [LARGE SCALE MRNA]</scope>
    <source>
        <strain>cv. Columbia</strain>
    </source>
</reference>
<protein>
    <recommendedName>
        <fullName>F-box/LRR-repeat protein At1g55660</fullName>
    </recommendedName>
</protein>
<name>FBL32_ARATH</name>
<comment type="alternative products">
    <event type="alternative splicing"/>
    <isoform>
        <id>Q1PFK0-1</id>
        <name>1</name>
        <sequence type="displayed"/>
    </isoform>
    <text>A number of isoforms are produced. According to EST sequences.</text>
</comment>
<comment type="sequence caution" evidence="2">
    <conflict type="erroneous gene model prediction">
        <sequence resource="EMBL-CDS" id="AAF79496"/>
    </conflict>
</comment>
<proteinExistence type="evidence at transcript level"/>
<feature type="chain" id="PRO_0000281933" description="F-box/LRR-repeat protein At1g55660">
    <location>
        <begin position="1"/>
        <end position="364"/>
    </location>
</feature>
<feature type="domain" description="F-box" evidence="1">
    <location>
        <begin position="52"/>
        <end position="98"/>
    </location>
</feature>
<feature type="repeat" description="LRR 1">
    <location>
        <begin position="158"/>
        <end position="179"/>
    </location>
</feature>
<feature type="repeat" description="LRR 2">
    <location>
        <begin position="185"/>
        <end position="206"/>
    </location>
</feature>
<feature type="repeat" description="LRR 3">
    <location>
        <begin position="207"/>
        <end position="228"/>
    </location>
</feature>
<feature type="repeat" description="LRR 4">
    <location>
        <begin position="233"/>
        <end position="254"/>
    </location>
</feature>
<feature type="repeat" description="LRR 5">
    <location>
        <begin position="256"/>
        <end position="277"/>
    </location>
</feature>
<feature type="repeat" description="LRR 6">
    <location>
        <begin position="279"/>
        <end position="300"/>
    </location>
</feature>
<sequence length="364" mass="41788">MFLCVIIPCLCSYLCSLFSWLLGQIPSFLFDKINESWLTSTKRNVEIVKNLMDKISQLPDELLVKVLSFLSTKDAVSTSILSMRWKSLWMWLPKLEYNFRHYSVSEGQGLARFITSSLRVHKAPAIESLSLKFRYGAIGSIKPKDIYLWVSLAVHVSNVRELSLKLFNFAELPTKLPKSLCKCKSIVILKLKDEILVDVPRKVCLPSLKTLFLGRVTYSDANSLHRLLSNCPVLEDLVMERDKIDNLGKLSVIVKSLQRLTLKMSRPCHLDGLKMNSPSLKYLKVIDERLESDSDDESDSDSPRYFYDFEDMPKLEEADFVLTFQNIKKFFGSITSVKRLSLCLGVYTEEVICFHHSIHLIVEQ</sequence>
<dbReference type="EMBL" id="AC002328">
    <property type="protein sequence ID" value="AAF79496.1"/>
    <property type="status" value="ALT_SEQ"/>
    <property type="molecule type" value="Genomic_DNA"/>
</dbReference>
<dbReference type="EMBL" id="CP002684">
    <property type="protein sequence ID" value="AEE33280.1"/>
    <property type="molecule type" value="Genomic_DNA"/>
</dbReference>
<dbReference type="EMBL" id="DQ446363">
    <property type="protein sequence ID" value="ABE65714.1"/>
    <property type="molecule type" value="mRNA"/>
</dbReference>
<dbReference type="RefSeq" id="NP_001185242.1">
    <molecule id="Q1PFK0-1"/>
    <property type="nucleotide sequence ID" value="NM_001198313.2"/>
</dbReference>
<dbReference type="BioGRID" id="27240">
    <property type="interactions" value="1"/>
</dbReference>
<dbReference type="FunCoup" id="Q1PFK0">
    <property type="interactions" value="4"/>
</dbReference>
<dbReference type="iPTMnet" id="Q1PFK0"/>
<dbReference type="PaxDb" id="3702-AT1G55660.1"/>
<dbReference type="EnsemblPlants" id="AT1G55660.2">
    <molecule id="Q1PFK0-1"/>
    <property type="protein sequence ID" value="AT1G55660.2"/>
    <property type="gene ID" value="AT1G55660"/>
</dbReference>
<dbReference type="GeneID" id="842015"/>
<dbReference type="Gramene" id="AT1G55660.2">
    <molecule id="Q1PFK0-1"/>
    <property type="protein sequence ID" value="AT1G55660.2"/>
    <property type="gene ID" value="AT1G55660"/>
</dbReference>
<dbReference type="KEGG" id="ath:AT1G55660"/>
<dbReference type="Araport" id="AT1G55660"/>
<dbReference type="TAIR" id="AT1G55660">
    <property type="gene designation" value="FOF2"/>
</dbReference>
<dbReference type="HOGENOM" id="CLU_010721_1_1_1"/>
<dbReference type="InParanoid" id="Q1PFK0"/>
<dbReference type="PhylomeDB" id="Q1PFK0"/>
<dbReference type="PRO" id="PR:Q1PFK0"/>
<dbReference type="Proteomes" id="UP000006548">
    <property type="component" value="Chromosome 1"/>
</dbReference>
<dbReference type="ExpressionAtlas" id="Q1PFK0">
    <property type="expression patterns" value="baseline and differential"/>
</dbReference>
<dbReference type="CDD" id="cd22160">
    <property type="entry name" value="F-box_AtFBL13-like"/>
    <property type="match status" value="1"/>
</dbReference>
<dbReference type="FunFam" id="1.20.1280.50:FF:000135">
    <property type="entry name" value="FBD, F-box and Leucine Rich Repeat domains containing protein"/>
    <property type="match status" value="1"/>
</dbReference>
<dbReference type="Gene3D" id="1.20.1280.50">
    <property type="match status" value="1"/>
</dbReference>
<dbReference type="Gene3D" id="3.80.10.10">
    <property type="entry name" value="Ribonuclease Inhibitor"/>
    <property type="match status" value="1"/>
</dbReference>
<dbReference type="InterPro" id="IPR036047">
    <property type="entry name" value="F-box-like_dom_sf"/>
</dbReference>
<dbReference type="InterPro" id="IPR053781">
    <property type="entry name" value="F-box_AtFBL13-like"/>
</dbReference>
<dbReference type="InterPro" id="IPR001810">
    <property type="entry name" value="F-box_dom"/>
</dbReference>
<dbReference type="InterPro" id="IPR050232">
    <property type="entry name" value="FBL13/AtMIF1-like"/>
</dbReference>
<dbReference type="InterPro" id="IPR032675">
    <property type="entry name" value="LRR_dom_sf"/>
</dbReference>
<dbReference type="InterPro" id="IPR055411">
    <property type="entry name" value="LRR_FXL15/At3g58940/PEG3-like"/>
</dbReference>
<dbReference type="PANTHER" id="PTHR31900">
    <property type="entry name" value="F-BOX/RNI SUPERFAMILY PROTEIN-RELATED"/>
    <property type="match status" value="1"/>
</dbReference>
<dbReference type="PANTHER" id="PTHR31900:SF28">
    <property type="entry name" value="FBD DOMAIN-CONTAINING PROTEIN"/>
    <property type="match status" value="1"/>
</dbReference>
<dbReference type="Pfam" id="PF00646">
    <property type="entry name" value="F-box"/>
    <property type="match status" value="1"/>
</dbReference>
<dbReference type="Pfam" id="PF24758">
    <property type="entry name" value="LRR_At5g56370"/>
    <property type="match status" value="1"/>
</dbReference>
<dbReference type="SMART" id="SM00256">
    <property type="entry name" value="FBOX"/>
    <property type="match status" value="1"/>
</dbReference>
<dbReference type="SUPFAM" id="SSF81383">
    <property type="entry name" value="F-box domain"/>
    <property type="match status" value="1"/>
</dbReference>
<dbReference type="SUPFAM" id="SSF52058">
    <property type="entry name" value="L domain-like"/>
    <property type="match status" value="1"/>
</dbReference>
<dbReference type="PROSITE" id="PS50181">
    <property type="entry name" value="FBOX"/>
    <property type="match status" value="1"/>
</dbReference>